<keyword id="KW-0010">Activator</keyword>
<keyword id="KW-0195">Cyclin</keyword>
<keyword id="KW-0539">Nucleus</keyword>
<keyword id="KW-1185">Reference proteome</keyword>
<keyword id="KW-0678">Repressor</keyword>
<keyword id="KW-0804">Transcription</keyword>
<keyword id="KW-0805">Transcription regulation</keyword>
<comment type="function">
    <text evidence="1">Component of the SRB8-11 complex. The SRB8-11 complex is a regulatory module of the Mediator complex which is itself involved in regulation of basal and activated RNA polymerase II-dependent transcription. The SRB8-11 complex may be involved in the transcriptional repression of a subset of genes regulated by Mediator. It may inhibit the association of the Mediator complex with RNA polymerase II to form the holoenzyme complex. The SRB8-11 complex phosphorylates the C-terminal domain (CTD) of the largest subunit of RNA polymerase II (By similarity).</text>
</comment>
<comment type="subunit">
    <text evidence="1">Component of the SRB8-11 complex, a regulatory module of the Mediator complex.</text>
</comment>
<comment type="subcellular location">
    <subcellularLocation>
        <location evidence="3">Nucleus</location>
    </subcellularLocation>
</comment>
<comment type="similarity">
    <text evidence="3">Belongs to the cyclin family. Cyclin C subfamily.</text>
</comment>
<gene>
    <name type="primary">SSN8</name>
    <name type="ordered locus">CAALFM_C305740CA</name>
    <name type="ORF">CaO19.7355</name>
</gene>
<evidence type="ECO:0000250" key="1"/>
<evidence type="ECO:0000256" key="2">
    <source>
        <dbReference type="SAM" id="MobiDB-lite"/>
    </source>
</evidence>
<evidence type="ECO:0000305" key="3"/>
<reference key="1">
    <citation type="journal article" date="2004" name="Proc. Natl. Acad. Sci. U.S.A.">
        <title>The diploid genome sequence of Candida albicans.</title>
        <authorList>
            <person name="Jones T."/>
            <person name="Federspiel N.A."/>
            <person name="Chibana H."/>
            <person name="Dungan J."/>
            <person name="Kalman S."/>
            <person name="Magee B.B."/>
            <person name="Newport G."/>
            <person name="Thorstenson Y.R."/>
            <person name="Agabian N."/>
            <person name="Magee P.T."/>
            <person name="Davis R.W."/>
            <person name="Scherer S."/>
        </authorList>
    </citation>
    <scope>NUCLEOTIDE SEQUENCE [LARGE SCALE GENOMIC DNA]</scope>
    <source>
        <strain>SC5314 / ATCC MYA-2876</strain>
    </source>
</reference>
<reference key="2">
    <citation type="journal article" date="2007" name="Genome Biol.">
        <title>Assembly of the Candida albicans genome into sixteen supercontigs aligned on the eight chromosomes.</title>
        <authorList>
            <person name="van het Hoog M."/>
            <person name="Rast T.J."/>
            <person name="Martchenko M."/>
            <person name="Grindle S."/>
            <person name="Dignard D."/>
            <person name="Hogues H."/>
            <person name="Cuomo C."/>
            <person name="Berriman M."/>
            <person name="Scherer S."/>
            <person name="Magee B.B."/>
            <person name="Whiteway M."/>
            <person name="Chibana H."/>
            <person name="Nantel A."/>
            <person name="Magee P.T."/>
        </authorList>
    </citation>
    <scope>GENOME REANNOTATION</scope>
    <source>
        <strain>SC5314 / ATCC MYA-2876</strain>
    </source>
</reference>
<reference key="3">
    <citation type="journal article" date="2013" name="Genome Biol.">
        <title>Assembly of a phased diploid Candida albicans genome facilitates allele-specific measurements and provides a simple model for repeat and indel structure.</title>
        <authorList>
            <person name="Muzzey D."/>
            <person name="Schwartz K."/>
            <person name="Weissman J.S."/>
            <person name="Sherlock G."/>
        </authorList>
    </citation>
    <scope>NUCLEOTIDE SEQUENCE [LARGE SCALE GENOMIC DNA]</scope>
    <scope>GENOME REANNOTATION</scope>
    <source>
        <strain>SC5314 / ATCC MYA-2876</strain>
    </source>
</reference>
<name>SSN8_CANAL</name>
<feature type="chain" id="PRO_0000314270" description="RNA polymerase II holoenzyme cyclin-like subunit">
    <location>
        <begin position="1"/>
        <end position="434"/>
    </location>
</feature>
<feature type="domain" description="Cyclin N-terminal">
    <location>
        <begin position="23"/>
        <end position="155"/>
    </location>
</feature>
<feature type="region of interest" description="Disordered" evidence="2">
    <location>
        <begin position="248"/>
        <end position="292"/>
    </location>
</feature>
<feature type="region of interest" description="Disordered" evidence="2">
    <location>
        <begin position="301"/>
        <end position="320"/>
    </location>
</feature>
<feature type="region of interest" description="Disordered" evidence="2">
    <location>
        <begin position="330"/>
        <end position="362"/>
    </location>
</feature>
<feature type="compositionally biased region" description="Low complexity" evidence="2">
    <location>
        <begin position="248"/>
        <end position="278"/>
    </location>
</feature>
<feature type="compositionally biased region" description="Low complexity" evidence="2">
    <location>
        <begin position="330"/>
        <end position="359"/>
    </location>
</feature>
<sequence>MSADYWNSSQRNQWQLTRFSLLEARRRVLLLERKMIQNGLIKDYPNIIYDYNMRIYLHNLLIKLGRRLNIRQIALATAEIYLTRFLTRVSLKEINVYLLITTCIYVACKIEECPQHIRLILSEARNIWPEYIPHDVTKLAEFEFYLIEEMDSYLLLHHPYKSLMQINEFLSNNYNVFGFKLTVEELQNAWSLINDSYITDLHLLLPPHTIAVAAIYITVVLKKNLSRVRQGNNNDNNININTMHISTGSSTNPININNNNNTNTSNNNGTTSTTTTTTAQETQVLGQDDNTEMNIDDLMNLTKSSNNSQDKSDDKMDIDNPLQSQVNLSQIQNQTQHQHQESTHNNTSSTNTGRNGINGQISQSNQELNNFDLDILDEDTIKINKFMNFLEHSHINLDEVVEAVQDMMNMYVLWNRYNEQGVKKALQVMLLNRI</sequence>
<dbReference type="EMBL" id="CP017625">
    <property type="protein sequence ID" value="AOW28583.1"/>
    <property type="molecule type" value="Genomic_DNA"/>
</dbReference>
<dbReference type="RefSeq" id="XP_716596.1">
    <property type="nucleotide sequence ID" value="XM_711503.1"/>
</dbReference>
<dbReference type="SMR" id="Q5A4H9"/>
<dbReference type="BioGRID" id="1224812">
    <property type="interactions" value="2"/>
</dbReference>
<dbReference type="FunCoup" id="Q5A4H9">
    <property type="interactions" value="988"/>
</dbReference>
<dbReference type="STRING" id="237561.Q5A4H9"/>
<dbReference type="EnsemblFungi" id="C3_05740C_A-T">
    <property type="protein sequence ID" value="C3_05740C_A-T-p1"/>
    <property type="gene ID" value="C3_05740C_A"/>
</dbReference>
<dbReference type="GeneID" id="3641718"/>
<dbReference type="KEGG" id="cal:CAALFM_C305740CA"/>
<dbReference type="CGD" id="CAL0000180084">
    <property type="gene designation" value="SSN8"/>
</dbReference>
<dbReference type="VEuPathDB" id="FungiDB:C3_05740C_A"/>
<dbReference type="eggNOG" id="KOG0794">
    <property type="taxonomic scope" value="Eukaryota"/>
</dbReference>
<dbReference type="HOGENOM" id="CLU_034754_2_1_1"/>
<dbReference type="InParanoid" id="Q5A4H9"/>
<dbReference type="OMA" id="DDGPRYW"/>
<dbReference type="OrthoDB" id="10266018at2759"/>
<dbReference type="Proteomes" id="UP000000559">
    <property type="component" value="Chromosome 3"/>
</dbReference>
<dbReference type="GO" id="GO:1990508">
    <property type="term" value="C:CKM complex"/>
    <property type="evidence" value="ECO:0007669"/>
    <property type="project" value="EnsemblFungi"/>
</dbReference>
<dbReference type="GO" id="GO:0016592">
    <property type="term" value="C:mediator complex"/>
    <property type="evidence" value="ECO:0000318"/>
    <property type="project" value="GO_Central"/>
</dbReference>
<dbReference type="GO" id="GO:0005634">
    <property type="term" value="C:nucleus"/>
    <property type="evidence" value="ECO:0000318"/>
    <property type="project" value="GO_Central"/>
</dbReference>
<dbReference type="GO" id="GO:0016538">
    <property type="term" value="F:cyclin-dependent protein serine/threonine kinase regulator activity"/>
    <property type="evidence" value="ECO:0000318"/>
    <property type="project" value="GO_Central"/>
</dbReference>
<dbReference type="GO" id="GO:0000979">
    <property type="term" value="F:RNA polymerase II core promoter sequence-specific DNA binding"/>
    <property type="evidence" value="ECO:0007669"/>
    <property type="project" value="EnsemblFungi"/>
</dbReference>
<dbReference type="GO" id="GO:0034605">
    <property type="term" value="P:cellular response to heat"/>
    <property type="evidence" value="ECO:0007669"/>
    <property type="project" value="EnsemblFungi"/>
</dbReference>
<dbReference type="GO" id="GO:0031505">
    <property type="term" value="P:fungal-type cell wall organization"/>
    <property type="evidence" value="ECO:0000315"/>
    <property type="project" value="CGD"/>
</dbReference>
<dbReference type="GO" id="GO:0051321">
    <property type="term" value="P:meiotic cell cycle"/>
    <property type="evidence" value="ECO:0007669"/>
    <property type="project" value="EnsemblFungi"/>
</dbReference>
<dbReference type="GO" id="GO:0000122">
    <property type="term" value="P:negative regulation of transcription by RNA polymerase II"/>
    <property type="evidence" value="ECO:0007669"/>
    <property type="project" value="EnsemblFungi"/>
</dbReference>
<dbReference type="GO" id="GO:0000411">
    <property type="term" value="P:positive regulation of transcription by galactose"/>
    <property type="evidence" value="ECO:0007669"/>
    <property type="project" value="EnsemblFungi"/>
</dbReference>
<dbReference type="GO" id="GO:0045944">
    <property type="term" value="P:positive regulation of transcription by RNA polymerase II"/>
    <property type="evidence" value="ECO:0000318"/>
    <property type="project" value="GO_Central"/>
</dbReference>
<dbReference type="CDD" id="cd20513">
    <property type="entry name" value="CYCLIN_CCNC_rpt1"/>
    <property type="match status" value="1"/>
</dbReference>
<dbReference type="CDD" id="cd20546">
    <property type="entry name" value="CYCLIN_SpCG1C_ScCTK2-like_rpt2"/>
    <property type="match status" value="1"/>
</dbReference>
<dbReference type="FunFam" id="1.10.472.10:FF:000077">
    <property type="entry name" value="RNA polymerase II holoenzyme cyclin-like subunit"/>
    <property type="match status" value="1"/>
</dbReference>
<dbReference type="Gene3D" id="1.10.472.10">
    <property type="entry name" value="Cyclin-like"/>
    <property type="match status" value="2"/>
</dbReference>
<dbReference type="InterPro" id="IPR013763">
    <property type="entry name" value="Cyclin-like_dom"/>
</dbReference>
<dbReference type="InterPro" id="IPR036915">
    <property type="entry name" value="Cyclin-like_sf"/>
</dbReference>
<dbReference type="InterPro" id="IPR043198">
    <property type="entry name" value="Cyclin/Ssn8"/>
</dbReference>
<dbReference type="InterPro" id="IPR006671">
    <property type="entry name" value="Cyclin_N"/>
</dbReference>
<dbReference type="PANTHER" id="PTHR10026">
    <property type="entry name" value="CYCLIN"/>
    <property type="match status" value="1"/>
</dbReference>
<dbReference type="Pfam" id="PF00134">
    <property type="entry name" value="Cyclin_N"/>
    <property type="match status" value="1"/>
</dbReference>
<dbReference type="SMART" id="SM00385">
    <property type="entry name" value="CYCLIN"/>
    <property type="match status" value="1"/>
</dbReference>
<dbReference type="SUPFAM" id="SSF47954">
    <property type="entry name" value="Cyclin-like"/>
    <property type="match status" value="2"/>
</dbReference>
<accession>Q5A4H9</accession>
<accession>A0A1D8PKE8</accession>
<protein>
    <recommendedName>
        <fullName>RNA polymerase II holoenzyme cyclin-like subunit</fullName>
    </recommendedName>
</protein>
<proteinExistence type="inferred from homology"/>
<organism>
    <name type="scientific">Candida albicans (strain SC5314 / ATCC MYA-2876)</name>
    <name type="common">Yeast</name>
    <dbReference type="NCBI Taxonomy" id="237561"/>
    <lineage>
        <taxon>Eukaryota</taxon>
        <taxon>Fungi</taxon>
        <taxon>Dikarya</taxon>
        <taxon>Ascomycota</taxon>
        <taxon>Saccharomycotina</taxon>
        <taxon>Pichiomycetes</taxon>
        <taxon>Debaryomycetaceae</taxon>
        <taxon>Candida/Lodderomyces clade</taxon>
        <taxon>Candida</taxon>
    </lineage>
</organism>